<evidence type="ECO:0000255" key="1">
    <source>
        <dbReference type="PROSITE-ProRule" id="PRU00434"/>
    </source>
</evidence>
<evidence type="ECO:0000305" key="2"/>
<dbReference type="EMBL" id="L77117">
    <property type="protein sequence ID" value="AAB98016.1"/>
    <property type="molecule type" value="Genomic_DNA"/>
</dbReference>
<dbReference type="PIR" id="C64304">
    <property type="entry name" value="C64304"/>
</dbReference>
<dbReference type="SMR" id="Q60350"/>
<dbReference type="FunCoup" id="Q60350">
    <property type="interactions" value="122"/>
</dbReference>
<dbReference type="STRING" id="243232.MJ_0035"/>
<dbReference type="PaxDb" id="243232-MJ_0035"/>
<dbReference type="EnsemblBacteria" id="AAB98016">
    <property type="protein sequence ID" value="AAB98016"/>
    <property type="gene ID" value="MJ_0035"/>
</dbReference>
<dbReference type="KEGG" id="mja:MJ_0035"/>
<dbReference type="eggNOG" id="arCOG04236">
    <property type="taxonomic scope" value="Archaea"/>
</dbReference>
<dbReference type="HOGENOM" id="CLU_000604_1_2_2"/>
<dbReference type="InParanoid" id="Q60350"/>
<dbReference type="PhylomeDB" id="Q60350"/>
<dbReference type="Proteomes" id="UP000000805">
    <property type="component" value="Chromosome"/>
</dbReference>
<dbReference type="GO" id="GO:0005524">
    <property type="term" value="F:ATP binding"/>
    <property type="evidence" value="ECO:0007669"/>
    <property type="project" value="UniProtKB-KW"/>
</dbReference>
<dbReference type="GO" id="GO:0016887">
    <property type="term" value="F:ATP hydrolysis activity"/>
    <property type="evidence" value="ECO:0007669"/>
    <property type="project" value="InterPro"/>
</dbReference>
<dbReference type="CDD" id="cd03217">
    <property type="entry name" value="ABC_FeS_Assembly"/>
    <property type="match status" value="1"/>
</dbReference>
<dbReference type="Gene3D" id="3.40.50.300">
    <property type="entry name" value="P-loop containing nucleotide triphosphate hydrolases"/>
    <property type="match status" value="1"/>
</dbReference>
<dbReference type="InterPro" id="IPR003593">
    <property type="entry name" value="AAA+_ATPase"/>
</dbReference>
<dbReference type="InterPro" id="IPR003439">
    <property type="entry name" value="ABC_transporter-like_ATP-bd"/>
</dbReference>
<dbReference type="InterPro" id="IPR017871">
    <property type="entry name" value="ABC_transporter-like_CS"/>
</dbReference>
<dbReference type="InterPro" id="IPR010230">
    <property type="entry name" value="FeS-cluster_ATPase_SufC"/>
</dbReference>
<dbReference type="InterPro" id="IPR027417">
    <property type="entry name" value="P-loop_NTPase"/>
</dbReference>
<dbReference type="PANTHER" id="PTHR43204">
    <property type="entry name" value="ABC TRANSPORTER I FAMILY MEMBER 6, CHLOROPLASTIC"/>
    <property type="match status" value="1"/>
</dbReference>
<dbReference type="PANTHER" id="PTHR43204:SF2">
    <property type="entry name" value="ABC TRANSPORTER, ATP-BINDING PROTEIN"/>
    <property type="match status" value="1"/>
</dbReference>
<dbReference type="Pfam" id="PF00005">
    <property type="entry name" value="ABC_tran"/>
    <property type="match status" value="1"/>
</dbReference>
<dbReference type="SMART" id="SM00382">
    <property type="entry name" value="AAA"/>
    <property type="match status" value="1"/>
</dbReference>
<dbReference type="SUPFAM" id="SSF52540">
    <property type="entry name" value="P-loop containing nucleoside triphosphate hydrolases"/>
    <property type="match status" value="1"/>
</dbReference>
<dbReference type="PROSITE" id="PS00211">
    <property type="entry name" value="ABC_TRANSPORTER_1"/>
    <property type="match status" value="1"/>
</dbReference>
<dbReference type="PROSITE" id="PS50893">
    <property type="entry name" value="ABC_TRANSPORTER_2"/>
    <property type="match status" value="1"/>
</dbReference>
<keyword id="KW-0067">ATP-binding</keyword>
<keyword id="KW-0547">Nucleotide-binding</keyword>
<keyword id="KW-1185">Reference proteome</keyword>
<keyword id="KW-0813">Transport</keyword>
<comment type="similarity">
    <text evidence="2">Belongs to the ABC transporter superfamily.</text>
</comment>
<sequence>MVSIMLLKVEDLHVYRGNREILKGVNLTVEENEIHAIIGPNGAGKSTLAYTIMGISGYKPTKGRIIFKGVDIIDKNITERARMGMTLAWQEPARFEGIKVKNYLMLGMNEKYKKDKEIAEEKIREALKLVNLDPDKYLDRYVDETLSGGERKRIELASIICMEPDLAILDEPDSGIDIVSFDEIKRVFDYLKDKGCSLLVITHREELAEHADRVSLICAGEVIKSGDPKEVGEFYKKECGKCYKKVPDGK</sequence>
<gene>
    <name type="ordered locus">MJ0035</name>
</gene>
<proteinExistence type="inferred from homology"/>
<accession>Q60350</accession>
<protein>
    <recommendedName>
        <fullName>Uncharacterized ABC transporter ATP-binding protein MJ0035</fullName>
    </recommendedName>
</protein>
<organism>
    <name type="scientific">Methanocaldococcus jannaschii (strain ATCC 43067 / DSM 2661 / JAL-1 / JCM 10045 / NBRC 100440)</name>
    <name type="common">Methanococcus jannaschii</name>
    <dbReference type="NCBI Taxonomy" id="243232"/>
    <lineage>
        <taxon>Archaea</taxon>
        <taxon>Methanobacteriati</taxon>
        <taxon>Methanobacteriota</taxon>
        <taxon>Methanomada group</taxon>
        <taxon>Methanococci</taxon>
        <taxon>Methanococcales</taxon>
        <taxon>Methanocaldococcaceae</taxon>
        <taxon>Methanocaldococcus</taxon>
    </lineage>
</organism>
<reference key="1">
    <citation type="journal article" date="1996" name="Science">
        <title>Complete genome sequence of the methanogenic archaeon, Methanococcus jannaschii.</title>
        <authorList>
            <person name="Bult C.J."/>
            <person name="White O."/>
            <person name="Olsen G.J."/>
            <person name="Zhou L."/>
            <person name="Fleischmann R.D."/>
            <person name="Sutton G.G."/>
            <person name="Blake J.A."/>
            <person name="FitzGerald L.M."/>
            <person name="Clayton R.A."/>
            <person name="Gocayne J.D."/>
            <person name="Kerlavage A.R."/>
            <person name="Dougherty B.A."/>
            <person name="Tomb J.-F."/>
            <person name="Adams M.D."/>
            <person name="Reich C.I."/>
            <person name="Overbeek R."/>
            <person name="Kirkness E.F."/>
            <person name="Weinstock K.G."/>
            <person name="Merrick J.M."/>
            <person name="Glodek A."/>
            <person name="Scott J.L."/>
            <person name="Geoghagen N.S.M."/>
            <person name="Weidman J.F."/>
            <person name="Fuhrmann J.L."/>
            <person name="Nguyen D."/>
            <person name="Utterback T.R."/>
            <person name="Kelley J.M."/>
            <person name="Peterson J.D."/>
            <person name="Sadow P.W."/>
            <person name="Hanna M.C."/>
            <person name="Cotton M.D."/>
            <person name="Roberts K.M."/>
            <person name="Hurst M.A."/>
            <person name="Kaine B.P."/>
            <person name="Borodovsky M."/>
            <person name="Klenk H.-P."/>
            <person name="Fraser C.M."/>
            <person name="Smith H.O."/>
            <person name="Woese C.R."/>
            <person name="Venter J.C."/>
        </authorList>
    </citation>
    <scope>NUCLEOTIDE SEQUENCE [LARGE SCALE GENOMIC DNA]</scope>
    <source>
        <strain>ATCC 43067 / DSM 2661 / JAL-1 / JCM 10045 / NBRC 100440</strain>
    </source>
</reference>
<feature type="chain" id="PRO_0000093216" description="Uncharacterized ABC transporter ATP-binding protein MJ0035">
    <location>
        <begin position="1"/>
        <end position="250"/>
    </location>
</feature>
<feature type="domain" description="ABC transporter" evidence="1">
    <location>
        <begin position="7"/>
        <end position="244"/>
    </location>
</feature>
<feature type="binding site" evidence="1">
    <location>
        <begin position="39"/>
        <end position="46"/>
    </location>
    <ligand>
        <name>ATP</name>
        <dbReference type="ChEBI" id="CHEBI:30616"/>
    </ligand>
</feature>
<name>Y035_METJA</name>